<dbReference type="EMBL" id="CR760498">
    <property type="protein sequence ID" value="CAJ81869.1"/>
    <property type="molecule type" value="mRNA"/>
</dbReference>
<dbReference type="EMBL" id="BC135336">
    <property type="protein sequence ID" value="AAI35337.1"/>
    <property type="molecule type" value="mRNA"/>
</dbReference>
<dbReference type="RefSeq" id="NP_001016621.1">
    <property type="nucleotide sequence ID" value="NM_001016621.2"/>
</dbReference>
<dbReference type="SMR" id="Q28IB1"/>
<dbReference type="FunCoup" id="Q28IB1">
    <property type="interactions" value="3792"/>
</dbReference>
<dbReference type="STRING" id="8364.ENSXETP00000002827"/>
<dbReference type="PaxDb" id="8364-ENSXETP00000023025"/>
<dbReference type="DNASU" id="549375"/>
<dbReference type="GeneID" id="549375"/>
<dbReference type="KEGG" id="xtr:549375"/>
<dbReference type="AGR" id="Xenbase:XB-GENE-478841"/>
<dbReference type="CTD" id="84955"/>
<dbReference type="Xenbase" id="XB-GENE-478841">
    <property type="gene designation" value="nudcd1"/>
</dbReference>
<dbReference type="eggNOG" id="KOG4379">
    <property type="taxonomic scope" value="Eukaryota"/>
</dbReference>
<dbReference type="HOGENOM" id="CLU_021010_1_0_1"/>
<dbReference type="InParanoid" id="Q28IB1"/>
<dbReference type="OMA" id="DTRFVHH"/>
<dbReference type="OrthoDB" id="428655at2759"/>
<dbReference type="PhylomeDB" id="Q28IB1"/>
<dbReference type="TreeFam" id="TF323350"/>
<dbReference type="Proteomes" id="UP000008143">
    <property type="component" value="Chromosome 6"/>
</dbReference>
<dbReference type="Bgee" id="ENSXETG00000010497">
    <property type="expression patterns" value="Expressed in ovary and 13 other cell types or tissues"/>
</dbReference>
<dbReference type="GO" id="GO:0005737">
    <property type="term" value="C:cytoplasm"/>
    <property type="evidence" value="ECO:0007669"/>
    <property type="project" value="UniProtKB-SubCell"/>
</dbReference>
<dbReference type="GO" id="GO:0005634">
    <property type="term" value="C:nucleus"/>
    <property type="evidence" value="ECO:0007669"/>
    <property type="project" value="UniProtKB-SubCell"/>
</dbReference>
<dbReference type="Gene3D" id="2.60.40.790">
    <property type="match status" value="1"/>
</dbReference>
<dbReference type="InterPro" id="IPR007052">
    <property type="entry name" value="CS_dom"/>
</dbReference>
<dbReference type="InterPro" id="IPR008978">
    <property type="entry name" value="HSP20-like_chaperone"/>
</dbReference>
<dbReference type="InterPro" id="IPR037895">
    <property type="entry name" value="NUDCD1"/>
</dbReference>
<dbReference type="PANTHER" id="PTHR21664">
    <property type="entry name" value="CHRONIC MYELOGENOUS LEUKEMIA TUMOR ANTIGEN 66"/>
    <property type="match status" value="1"/>
</dbReference>
<dbReference type="PANTHER" id="PTHR21664:SF1">
    <property type="entry name" value="NUDC DOMAIN-CONTAINING PROTEIN 1"/>
    <property type="match status" value="1"/>
</dbReference>
<dbReference type="Pfam" id="PF04969">
    <property type="entry name" value="CS"/>
    <property type="match status" value="1"/>
</dbReference>
<dbReference type="SUPFAM" id="SSF49764">
    <property type="entry name" value="HSP20-like chaperones"/>
    <property type="match status" value="1"/>
</dbReference>
<dbReference type="PROSITE" id="PS51203">
    <property type="entry name" value="CS"/>
    <property type="match status" value="1"/>
</dbReference>
<name>NUDC1_XENTR</name>
<proteinExistence type="evidence at transcript level"/>
<feature type="chain" id="PRO_0000307708" description="NudC domain-containing protein 1">
    <location>
        <begin position="1"/>
        <end position="586"/>
    </location>
</feature>
<feature type="domain" description="CS" evidence="2">
    <location>
        <begin position="275"/>
        <end position="364"/>
    </location>
</feature>
<feature type="region of interest" description="Disordered" evidence="3">
    <location>
        <begin position="259"/>
        <end position="278"/>
    </location>
</feature>
<evidence type="ECO:0000250" key="1"/>
<evidence type="ECO:0000255" key="2">
    <source>
        <dbReference type="PROSITE-ProRule" id="PRU00547"/>
    </source>
</evidence>
<evidence type="ECO:0000256" key="3">
    <source>
        <dbReference type="SAM" id="MobiDB-lite"/>
    </source>
</evidence>
<evidence type="ECO:0000312" key="4">
    <source>
        <dbReference type="EMBL" id="AAI35337.1"/>
    </source>
</evidence>
<evidence type="ECO:0000312" key="5">
    <source>
        <dbReference type="EMBL" id="CAJ81869.1"/>
    </source>
</evidence>
<gene>
    <name evidence="5" type="primary">nudcd1</name>
    <name type="ORF">TEgg071c06.1</name>
</gene>
<comment type="subcellular location">
    <subcellularLocation>
        <location evidence="1">Cytoplasm</location>
    </subcellularLocation>
    <subcellularLocation>
        <location evidence="1">Nucleus</location>
    </subcellularLocation>
</comment>
<accession>Q28IB1</accession>
<keyword id="KW-0963">Cytoplasm</keyword>
<keyword id="KW-0539">Nucleus</keyword>
<keyword id="KW-1185">Reference proteome</keyword>
<sequence>MEGSNCSLRVNRQLLDPKFESYKLSLDPLPCYNVELDAAVAEVCLRDDQYTLDHMRAFGMYNYLHCNPWIPNSVFYVDQLERVMSFTVTLDTAMGKPIEVFRFPRDLNTCDSRLCSSMYFASAQWVTLSDGTGTLYIIRIGNQSGSVSGKWEIMFNQELGEPFIVVHSVSSVRDELHIIDVLLLSIEKDESDIKGSGFHVCLEWVSIARAQNEDNGKYEILKRRKLFGKSVPHYAAIEPLGNGVMMISYKPFRFIANDKDQPESSEDEKMDEDNKREPLYNWHQTGEDVTLTFQLPEGMTKEDLTIKFLPGEIDISLKDQGTFLKGQLYLDIDCESSAWIIKEGRSVEVTLTKREPGSTWAELVIGDKHGEYIVDPTQTAAIAEQLMHLTSEDMNPNPETEKPPCNAQELEECDLFLEDSTSLCRFDGARLKATHVVNLGSNPYLFTFVATPELMPCFALRHDVDALLWQPVSEQADNLWDHIATFNALGYVQASKQDKKFFTCAPNFSYSALCECVRRIFIYRQPTPVSTELYNRKEGRRVGQVAKQQVASLETTDPIVGFQASNERLFVLTTKKLSVIKVNSTD</sequence>
<protein>
    <recommendedName>
        <fullName>NudC domain-containing protein 1</fullName>
    </recommendedName>
</protein>
<reference evidence="5" key="1">
    <citation type="submission" date="2006-10" db="EMBL/GenBank/DDBJ databases">
        <authorList>
            <consortium name="Sanger Xenopus tropicalis EST/cDNA project"/>
        </authorList>
    </citation>
    <scope>NUCLEOTIDE SEQUENCE [LARGE SCALE MRNA]</scope>
    <source>
        <tissue evidence="5">Egg</tissue>
    </source>
</reference>
<reference evidence="5" key="2">
    <citation type="submission" date="2007-03" db="EMBL/GenBank/DDBJ databases">
        <authorList>
            <consortium name="NIH - Xenopus Gene Collection (XGC) project"/>
        </authorList>
    </citation>
    <scope>NUCLEOTIDE SEQUENCE [LARGE SCALE MRNA]</scope>
    <source>
        <tissue evidence="4">Embryo</tissue>
    </source>
</reference>
<organism>
    <name type="scientific">Xenopus tropicalis</name>
    <name type="common">Western clawed frog</name>
    <name type="synonym">Silurana tropicalis</name>
    <dbReference type="NCBI Taxonomy" id="8364"/>
    <lineage>
        <taxon>Eukaryota</taxon>
        <taxon>Metazoa</taxon>
        <taxon>Chordata</taxon>
        <taxon>Craniata</taxon>
        <taxon>Vertebrata</taxon>
        <taxon>Euteleostomi</taxon>
        <taxon>Amphibia</taxon>
        <taxon>Batrachia</taxon>
        <taxon>Anura</taxon>
        <taxon>Pipoidea</taxon>
        <taxon>Pipidae</taxon>
        <taxon>Xenopodinae</taxon>
        <taxon>Xenopus</taxon>
        <taxon>Silurana</taxon>
    </lineage>
</organism>